<comment type="function">
    <text evidence="1">Participates in the primary piRNA biogenesis pathway and is required during spermatogenesis to repress transposable elements and prevent their mobilization, which is essential for the germline integrity. The piRNA metabolic process mediates the repression of transposable elements during meiosis by forming complexes composed of piRNAs and Piwi proteins and govern the methylation and subsequent repression of transposons. Required for the final steps of primary piRNA biogenesis by participating in the processing of 31-37 nt intermediates into mature piRNAs. May act in pi-bodies and piP-bodies by transferring piRNA precursors or intermediates to or between these granules.</text>
</comment>
<comment type="subunit">
    <text evidence="1">Interacts with (symmetrically methylated) PIWIL1, PIWIL2 and PIWIL4.</text>
</comment>
<comment type="interaction">
    <interactant intactId="EBI-12842466">
        <id>Q9Y2W6</id>
    </interactant>
    <interactant intactId="EBI-14240149">
        <id>B3EWG3</id>
        <label>FAM25A</label>
    </interactant>
    <organismsDiffer>false</organismsDiffer>
    <experiments>3</experiments>
</comment>
<comment type="interaction">
    <interactant intactId="EBI-12842466">
        <id>Q9Y2W6</id>
    </interactant>
    <interactant intactId="EBI-2510837">
        <id>Q9NS86</id>
        <label>LANCL2</label>
    </interactant>
    <organismsDiffer>false</organismsDiffer>
    <experiments>3</experiments>
</comment>
<comment type="interaction">
    <interactant intactId="EBI-12842466">
        <id>Q9Y2W6</id>
    </interactant>
    <interactant intactId="EBI-9675976">
        <id>Q9BV90</id>
        <label>SNRNP25</label>
    </interactant>
    <organismsDiffer>false</organismsDiffer>
    <experiments>3</experiments>
</comment>
<comment type="interaction">
    <interactant intactId="EBI-12842466">
        <id>Q9Y2W6</id>
    </interactant>
    <interactant intactId="EBI-11317716">
        <id>Q8NCN2</id>
        <label>ZBTB34</label>
    </interactant>
    <organismsDiffer>false</organismsDiffer>
    <experiments>4</experiments>
</comment>
<comment type="interaction">
    <interactant intactId="EBI-12842466">
        <id>Q9Y2W6</id>
    </interactant>
    <interactant intactId="EBI-11419867">
        <id>Q8TF47</id>
        <label>ZFP90</label>
    </interactant>
    <organismsDiffer>false</organismsDiffer>
    <experiments>3</experiments>
</comment>
<comment type="subcellular location">
    <subcellularLocation>
        <location evidence="1">Cytoplasm</location>
    </subcellularLocation>
    <subcellularLocation>
        <location evidence="1">Mitochondrion</location>
    </subcellularLocation>
    <text evidence="1">Probable component of the meiotic nuage, also named P granule, a germ-cell-specific organelle required to repress transposon activity during meiosis. Colocalizes with pi- and piP-bodies, a subset of the nuage which contains secondary piRNAs. Associated with mitochondria in the germline.</text>
</comment>
<comment type="alternative products">
    <event type="alternative splicing"/>
    <isoform>
        <id>Q9Y2W6-2</id>
        <name>1</name>
        <sequence type="displayed"/>
    </isoform>
    <isoform>
        <id>Q9Y2W6-3</id>
        <name>2</name>
        <sequence type="described" ref="VSP_040981"/>
    </isoform>
</comment>
<comment type="PTM">
    <text evidence="5">Ubiquitinated by PRKN during mitophagy, leading to its degradation and enhancement of mitophagy. Deubiquitinated by USP30.</text>
</comment>
<comment type="similarity">
    <text evidence="6">Belongs to the Tdrkh family.</text>
</comment>
<comment type="sequence caution" evidence="6">
    <conflict type="erroneous termination">
        <sequence resource="EMBL-CDS" id="AAD30971"/>
    </conflict>
    <text>Extended C-terminus.</text>
</comment>
<comment type="sequence caution" evidence="6">
    <conflict type="erroneous termination">
        <sequence resource="EMBL" id="BC022467"/>
    </conflict>
    <text>Truncated C-terminus.</text>
</comment>
<name>TDRKH_HUMAN</name>
<protein>
    <recommendedName>
        <fullName>Tudor and KH domain-containing protein</fullName>
    </recommendedName>
    <alternativeName>
        <fullName>Tudor domain-containing protein 2</fullName>
    </alternativeName>
</protein>
<proteinExistence type="evidence at protein level"/>
<organism>
    <name type="scientific">Homo sapiens</name>
    <name type="common">Human</name>
    <dbReference type="NCBI Taxonomy" id="9606"/>
    <lineage>
        <taxon>Eukaryota</taxon>
        <taxon>Metazoa</taxon>
        <taxon>Chordata</taxon>
        <taxon>Craniata</taxon>
        <taxon>Vertebrata</taxon>
        <taxon>Euteleostomi</taxon>
        <taxon>Mammalia</taxon>
        <taxon>Eutheria</taxon>
        <taxon>Euarchontoglires</taxon>
        <taxon>Primates</taxon>
        <taxon>Haplorrhini</taxon>
        <taxon>Catarrhini</taxon>
        <taxon>Hominidae</taxon>
        <taxon>Homo</taxon>
    </lineage>
</organism>
<feature type="chain" id="PRO_0000050141" description="Tudor and KH domain-containing protein">
    <location>
        <begin position="1"/>
        <end position="561"/>
    </location>
</feature>
<feature type="domain" description="KH 1" evidence="2">
    <location>
        <begin position="52"/>
        <end position="115"/>
    </location>
</feature>
<feature type="domain" description="KH 2" evidence="2">
    <location>
        <begin position="124"/>
        <end position="190"/>
    </location>
</feature>
<feature type="domain" description="Tudor" evidence="3">
    <location>
        <begin position="353"/>
        <end position="412"/>
    </location>
</feature>
<feature type="region of interest" description="Disordered" evidence="4">
    <location>
        <begin position="219"/>
        <end position="262"/>
    </location>
</feature>
<feature type="modified residue" description="Phosphoserine" evidence="7">
    <location>
        <position position="278"/>
    </location>
</feature>
<feature type="cross-link" description="Glycyl lysine isopeptide (Lys-Gly) (interchain with G-Cter in ubiquitin)" evidence="5">
    <location>
        <position position="65"/>
    </location>
</feature>
<feature type="cross-link" description="Glycyl lysine isopeptide (Lys-Gly) (interchain with G-Cter in ubiquitin)" evidence="5">
    <location>
        <position position="76"/>
    </location>
</feature>
<feature type="cross-link" description="Glycyl lysine isopeptide (Lys-Gly) (interchain with G-Cter in ubiquitin)" evidence="5">
    <location>
        <position position="110"/>
    </location>
</feature>
<feature type="cross-link" description="Glycyl lysine isopeptide (Lys-Gly) (interchain with G-Cter in ubiquitin)" evidence="5">
    <location>
        <position position="112"/>
    </location>
</feature>
<feature type="cross-link" description="Glycyl lysine isopeptide (Lys-Gly) (interchain with G-Cter in ubiquitin)" evidence="5">
    <location>
        <position position="152"/>
    </location>
</feature>
<feature type="cross-link" description="Glycyl lysine isopeptide (Lys-Gly) (interchain with G-Cter in ubiquitin)" evidence="5">
    <location>
        <position position="175"/>
    </location>
</feature>
<feature type="cross-link" description="Glycyl lysine isopeptide (Lys-Gly) (interchain with G-Cter in ubiquitin)" evidence="5">
    <location>
        <position position="181"/>
    </location>
</feature>
<feature type="cross-link" description="Glycyl lysine isopeptide (Lys-Gly) (interchain with G-Cter in ubiquitin)" evidence="5">
    <location>
        <position position="187"/>
    </location>
</feature>
<feature type="cross-link" description="Glycyl lysine isopeptide (Lys-Gly) (interchain with G-Cter in ubiquitin)" evidence="5">
    <location>
        <position position="193"/>
    </location>
</feature>
<feature type="cross-link" description="Glycyl lysine isopeptide (Lys-Gly) (interchain with G-Cter in ubiquitin)" evidence="5">
    <location>
        <position position="256"/>
    </location>
</feature>
<feature type="cross-link" description="Glycyl lysine isopeptide (Lys-Gly) (interchain with G-Cter in ubiquitin)" evidence="5">
    <location>
        <position position="267"/>
    </location>
</feature>
<feature type="cross-link" description="Glycyl lysine isopeptide (Lys-Gly) (interchain with G-Cter in ubiquitin)" evidence="5">
    <location>
        <position position="479"/>
    </location>
</feature>
<feature type="cross-link" description="Glycyl lysine isopeptide (Lys-Gly) (interchain with G-Cter in ubiquitin)" evidence="5">
    <location>
        <position position="510"/>
    </location>
</feature>
<feature type="cross-link" description="Glycyl lysine isopeptide (Lys-Gly) (interchain with G-Cter in ubiquitin)" evidence="5">
    <location>
        <position position="529"/>
    </location>
</feature>
<feature type="splice variant" id="VSP_040981" description="In isoform 2." evidence="6">
    <location>
        <begin position="108"/>
        <end position="152"/>
    </location>
</feature>
<feature type="sequence variant" id="VAR_055980" description="In dbSNP:rs17853082.">
    <original>G</original>
    <variation>A</variation>
    <location>
        <position position="257"/>
    </location>
</feature>
<feature type="sequence conflict" description="In Ref. 1; AAF36701." evidence="6" ref="1">
    <original>Q</original>
    <variation>H</variation>
    <location>
        <position position="15"/>
    </location>
</feature>
<feature type="sequence conflict" description="In Ref. 1; AAF36701." evidence="6" ref="1">
    <original>F</original>
    <variation>S</variation>
    <location>
        <position position="321"/>
    </location>
</feature>
<feature type="strand" evidence="11">
    <location>
        <begin position="309"/>
        <end position="317"/>
    </location>
</feature>
<feature type="strand" evidence="11">
    <location>
        <begin position="320"/>
        <end position="325"/>
    </location>
</feature>
<feature type="helix" evidence="9">
    <location>
        <begin position="332"/>
        <end position="344"/>
    </location>
</feature>
<feature type="strand" evidence="9">
    <location>
        <begin position="359"/>
        <end position="363"/>
    </location>
</feature>
<feature type="turn" evidence="9">
    <location>
        <begin position="365"/>
        <end position="367"/>
    </location>
</feature>
<feature type="strand" evidence="9">
    <location>
        <begin position="370"/>
        <end position="378"/>
    </location>
</feature>
<feature type="strand" evidence="8">
    <location>
        <begin position="380"/>
        <end position="382"/>
    </location>
</feature>
<feature type="strand" evidence="9">
    <location>
        <begin position="384"/>
        <end position="388"/>
    </location>
</feature>
<feature type="turn" evidence="9">
    <location>
        <begin position="389"/>
        <end position="391"/>
    </location>
</feature>
<feature type="strand" evidence="9">
    <location>
        <begin position="394"/>
        <end position="397"/>
    </location>
</feature>
<feature type="helix" evidence="9">
    <location>
        <begin position="399"/>
        <end position="401"/>
    </location>
</feature>
<feature type="helix" evidence="9">
    <location>
        <begin position="407"/>
        <end position="410"/>
    </location>
</feature>
<feature type="strand" evidence="11">
    <location>
        <begin position="417"/>
        <end position="421"/>
    </location>
</feature>
<feature type="strand" evidence="11">
    <location>
        <begin position="424"/>
        <end position="430"/>
    </location>
</feature>
<feature type="helix" evidence="11">
    <location>
        <begin position="433"/>
        <end position="442"/>
    </location>
</feature>
<feature type="turn" evidence="10">
    <location>
        <begin position="444"/>
        <end position="448"/>
    </location>
</feature>
<feature type="strand" evidence="11">
    <location>
        <begin position="451"/>
        <end position="455"/>
    </location>
</feature>
<feature type="strand" evidence="11">
    <location>
        <begin position="468"/>
        <end position="473"/>
    </location>
</feature>
<feature type="strand" evidence="10">
    <location>
        <begin position="475"/>
        <end position="477"/>
    </location>
</feature>
<feature type="helix" evidence="11">
    <location>
        <begin position="482"/>
        <end position="488"/>
    </location>
</feature>
<feature type="strand" evidence="11">
    <location>
        <begin position="491"/>
        <end position="494"/>
    </location>
</feature>
<gene>
    <name type="primary">TDRKH</name>
    <name type="synonym">TDRD2</name>
</gene>
<dbReference type="EMBL" id="AF119121">
    <property type="protein sequence ID" value="AAD30971.1"/>
    <property type="status" value="ALT_SEQ"/>
    <property type="molecule type" value="mRNA"/>
</dbReference>
<dbReference type="EMBL" id="AF227192">
    <property type="protein sequence ID" value="AAF36701.1"/>
    <property type="molecule type" value="mRNA"/>
</dbReference>
<dbReference type="EMBL" id="AL589765">
    <property type="status" value="NOT_ANNOTATED_CDS"/>
    <property type="molecule type" value="Genomic_DNA"/>
</dbReference>
<dbReference type="EMBL" id="CH471121">
    <property type="protein sequence ID" value="EAW53411.1"/>
    <property type="molecule type" value="Genomic_DNA"/>
</dbReference>
<dbReference type="EMBL" id="CH471121">
    <property type="protein sequence ID" value="EAW53409.1"/>
    <property type="molecule type" value="Genomic_DNA"/>
</dbReference>
<dbReference type="EMBL" id="CH471121">
    <property type="protein sequence ID" value="EAW53410.1"/>
    <property type="molecule type" value="Genomic_DNA"/>
</dbReference>
<dbReference type="EMBL" id="BC022467">
    <property type="status" value="NOT_ANNOTATED_CDS"/>
    <property type="molecule type" value="mRNA"/>
</dbReference>
<dbReference type="CCDS" id="CCDS41394.1">
    <molecule id="Q9Y2W6-2"/>
</dbReference>
<dbReference type="CCDS" id="CCDS41395.1">
    <molecule id="Q9Y2W6-3"/>
</dbReference>
<dbReference type="RefSeq" id="NP_001077432.1">
    <molecule id="Q9Y2W6-2"/>
    <property type="nucleotide sequence ID" value="NM_001083963.1"/>
</dbReference>
<dbReference type="RefSeq" id="NP_001077433.1">
    <molecule id="Q9Y2W6-3"/>
    <property type="nucleotide sequence ID" value="NM_001083964.1"/>
</dbReference>
<dbReference type="RefSeq" id="NP_001077434.1">
    <molecule id="Q9Y2W6-2"/>
    <property type="nucleotide sequence ID" value="NM_001083965.2"/>
</dbReference>
<dbReference type="RefSeq" id="NP_006853.2">
    <molecule id="Q9Y2W6-2"/>
    <property type="nucleotide sequence ID" value="NM_006862.4"/>
</dbReference>
<dbReference type="RefSeq" id="XP_016855611.1">
    <molecule id="Q9Y2W6-2"/>
    <property type="nucleotide sequence ID" value="XM_017000122.3"/>
</dbReference>
<dbReference type="RefSeq" id="XP_016855612.1">
    <molecule id="Q9Y2W6-2"/>
    <property type="nucleotide sequence ID" value="XM_017000123.3"/>
</dbReference>
<dbReference type="RefSeq" id="XP_016855613.1">
    <molecule id="Q9Y2W6-2"/>
    <property type="nucleotide sequence ID" value="XM_017000124.2"/>
</dbReference>
<dbReference type="RefSeq" id="XP_016855614.1">
    <molecule id="Q9Y2W6-2"/>
    <property type="nucleotide sequence ID" value="XM_017000125.2"/>
</dbReference>
<dbReference type="RefSeq" id="XP_016855615.1">
    <molecule id="Q9Y2W6-2"/>
    <property type="nucleotide sequence ID" value="XM_017000126.2"/>
</dbReference>
<dbReference type="RefSeq" id="XP_016855616.1">
    <molecule id="Q9Y2W6-2"/>
    <property type="nucleotide sequence ID" value="XM_017000127.2"/>
</dbReference>
<dbReference type="RefSeq" id="XP_047297945.1">
    <molecule id="Q9Y2W6-2"/>
    <property type="nucleotide sequence ID" value="XM_047441989.1"/>
</dbReference>
<dbReference type="RefSeq" id="XP_047297964.1">
    <molecule id="Q9Y2W6-2"/>
    <property type="nucleotide sequence ID" value="XM_047442008.1"/>
</dbReference>
<dbReference type="RefSeq" id="XP_054189936.1">
    <molecule id="Q9Y2W6-2"/>
    <property type="nucleotide sequence ID" value="XM_054333961.1"/>
</dbReference>
<dbReference type="RefSeq" id="XP_054189937.1">
    <molecule id="Q9Y2W6-2"/>
    <property type="nucleotide sequence ID" value="XM_054333962.1"/>
</dbReference>
<dbReference type="RefSeq" id="XP_054189938.1">
    <molecule id="Q9Y2W6-2"/>
    <property type="nucleotide sequence ID" value="XM_054333963.1"/>
</dbReference>
<dbReference type="RefSeq" id="XP_054189939.1">
    <molecule id="Q9Y2W6-2"/>
    <property type="nucleotide sequence ID" value="XM_054333964.1"/>
</dbReference>
<dbReference type="RefSeq" id="XP_054189940.1">
    <molecule id="Q9Y2W6-2"/>
    <property type="nucleotide sequence ID" value="XM_054333965.1"/>
</dbReference>
<dbReference type="RefSeq" id="XP_054189941.1">
    <molecule id="Q9Y2W6-2"/>
    <property type="nucleotide sequence ID" value="XM_054333966.1"/>
</dbReference>
<dbReference type="RefSeq" id="XP_054189942.1">
    <molecule id="Q9Y2W6-2"/>
    <property type="nucleotide sequence ID" value="XM_054333967.1"/>
</dbReference>
<dbReference type="RefSeq" id="XP_054189943.1">
    <molecule id="Q9Y2W6-2"/>
    <property type="nucleotide sequence ID" value="XM_054333968.1"/>
</dbReference>
<dbReference type="PDB" id="2DIQ">
    <property type="method" value="NMR"/>
    <property type="chains" value="A=329-425"/>
</dbReference>
<dbReference type="PDB" id="3FDR">
    <property type="method" value="X-ray"/>
    <property type="resolution" value="1.75 A"/>
    <property type="chains" value="A=327-420"/>
</dbReference>
<dbReference type="PDB" id="5J39">
    <property type="method" value="X-ray"/>
    <property type="resolution" value="1.95 A"/>
    <property type="chains" value="A/B=309-498"/>
</dbReference>
<dbReference type="PDB" id="6B57">
    <property type="method" value="X-ray"/>
    <property type="resolution" value="1.93 A"/>
    <property type="chains" value="A/B=309-497"/>
</dbReference>
<dbReference type="PDB" id="6PI7">
    <property type="method" value="X-ray"/>
    <property type="resolution" value="2.80 A"/>
    <property type="chains" value="A/D=305-525"/>
</dbReference>
<dbReference type="PDBsum" id="2DIQ"/>
<dbReference type="PDBsum" id="3FDR"/>
<dbReference type="PDBsum" id="5J39"/>
<dbReference type="PDBsum" id="6B57"/>
<dbReference type="PDBsum" id="6PI7"/>
<dbReference type="SMR" id="Q9Y2W6"/>
<dbReference type="BioGRID" id="116212">
    <property type="interactions" value="79"/>
</dbReference>
<dbReference type="DIP" id="DIP-59459N"/>
<dbReference type="FunCoup" id="Q9Y2W6">
    <property type="interactions" value="537"/>
</dbReference>
<dbReference type="IntAct" id="Q9Y2W6">
    <property type="interactions" value="45"/>
</dbReference>
<dbReference type="MINT" id="Q9Y2W6"/>
<dbReference type="STRING" id="9606.ENSP00000357812"/>
<dbReference type="iPTMnet" id="Q9Y2W6"/>
<dbReference type="PhosphoSitePlus" id="Q9Y2W6"/>
<dbReference type="SwissPalm" id="Q9Y2W6"/>
<dbReference type="BioMuta" id="TDRKH"/>
<dbReference type="DMDM" id="332278122"/>
<dbReference type="jPOST" id="Q9Y2W6"/>
<dbReference type="MassIVE" id="Q9Y2W6"/>
<dbReference type="PaxDb" id="9606-ENSP00000357812"/>
<dbReference type="PeptideAtlas" id="Q9Y2W6"/>
<dbReference type="ProteomicsDB" id="85917">
    <molecule id="Q9Y2W6-2"/>
</dbReference>
<dbReference type="ProteomicsDB" id="85918">
    <molecule id="Q9Y2W6-3"/>
</dbReference>
<dbReference type="Pumba" id="Q9Y2W6"/>
<dbReference type="ABCD" id="Q9Y2W6">
    <property type="antibodies" value="6 sequenced antibodies"/>
</dbReference>
<dbReference type="Antibodypedia" id="10583">
    <property type="antibodies" value="105 antibodies from 26 providers"/>
</dbReference>
<dbReference type="DNASU" id="11022"/>
<dbReference type="Ensembl" id="ENST00000368822.5">
    <molecule id="Q9Y2W6-2"/>
    <property type="protein sequence ID" value="ENSP00000357812.1"/>
    <property type="gene ID" value="ENSG00000182134.17"/>
</dbReference>
<dbReference type="Ensembl" id="ENST00000368824.8">
    <molecule id="Q9Y2W6-2"/>
    <property type="protein sequence ID" value="ENSP00000357815.3"/>
    <property type="gene ID" value="ENSG00000182134.17"/>
</dbReference>
<dbReference type="Ensembl" id="ENST00000368825.7">
    <molecule id="Q9Y2W6-3"/>
    <property type="protein sequence ID" value="ENSP00000357817.3"/>
    <property type="gene ID" value="ENSG00000182134.17"/>
</dbReference>
<dbReference type="Ensembl" id="ENST00000368827.10">
    <molecule id="Q9Y2W6-2"/>
    <property type="protein sequence ID" value="ENSP00000357819.6"/>
    <property type="gene ID" value="ENSG00000182134.17"/>
</dbReference>
<dbReference type="Ensembl" id="ENST00000458431.6">
    <molecule id="Q9Y2W6-2"/>
    <property type="protein sequence ID" value="ENSP00000395718.2"/>
    <property type="gene ID" value="ENSG00000182134.17"/>
</dbReference>
<dbReference type="GeneID" id="11022"/>
<dbReference type="KEGG" id="hsa:11022"/>
<dbReference type="MANE-Select" id="ENST00000368824.8">
    <property type="protein sequence ID" value="ENSP00000357815.3"/>
    <property type="RefSeq nucleotide sequence ID" value="NM_001083965.2"/>
    <property type="RefSeq protein sequence ID" value="NP_001077434.1"/>
</dbReference>
<dbReference type="UCSC" id="uc001eza.6">
    <molecule id="Q9Y2W6-2"/>
    <property type="organism name" value="human"/>
</dbReference>
<dbReference type="AGR" id="HGNC:11713"/>
<dbReference type="CTD" id="11022"/>
<dbReference type="DisGeNET" id="11022"/>
<dbReference type="GeneCards" id="TDRKH"/>
<dbReference type="HGNC" id="HGNC:11713">
    <property type="gene designation" value="TDRKH"/>
</dbReference>
<dbReference type="HPA" id="ENSG00000182134">
    <property type="expression patterns" value="Tissue enhanced (parathyroid gland, testis)"/>
</dbReference>
<dbReference type="MalaCards" id="TDRKH"/>
<dbReference type="MIM" id="609501">
    <property type="type" value="gene"/>
</dbReference>
<dbReference type="neXtProt" id="NX_Q9Y2W6"/>
<dbReference type="OpenTargets" id="ENSG00000182134"/>
<dbReference type="PharmGKB" id="PA36431"/>
<dbReference type="VEuPathDB" id="HostDB:ENSG00000182134"/>
<dbReference type="eggNOG" id="KOG2279">
    <property type="taxonomic scope" value="Eukaryota"/>
</dbReference>
<dbReference type="GeneTree" id="ENSGT00940000159364"/>
<dbReference type="InParanoid" id="Q9Y2W6"/>
<dbReference type="OMA" id="NMVQEMT"/>
<dbReference type="OrthoDB" id="9995375at2759"/>
<dbReference type="PAN-GO" id="Q9Y2W6">
    <property type="GO annotations" value="3 GO annotations based on evolutionary models"/>
</dbReference>
<dbReference type="PhylomeDB" id="Q9Y2W6"/>
<dbReference type="TreeFam" id="TF318292"/>
<dbReference type="PathwayCommons" id="Q9Y2W6"/>
<dbReference type="Reactome" id="R-HSA-5601884">
    <property type="pathway name" value="PIWI-interacting RNA (piRNA) biogenesis"/>
</dbReference>
<dbReference type="SignaLink" id="Q9Y2W6"/>
<dbReference type="BioGRID-ORCS" id="11022">
    <property type="hits" value="11 hits in 1166 CRISPR screens"/>
</dbReference>
<dbReference type="EvolutionaryTrace" id="Q9Y2W6"/>
<dbReference type="GeneWiki" id="TDRKH"/>
<dbReference type="GenomeRNAi" id="11022"/>
<dbReference type="Pharos" id="Q9Y2W6">
    <property type="development level" value="Tbio"/>
</dbReference>
<dbReference type="PRO" id="PR:Q9Y2W6"/>
<dbReference type="Proteomes" id="UP000005640">
    <property type="component" value="Chromosome 1"/>
</dbReference>
<dbReference type="RNAct" id="Q9Y2W6">
    <property type="molecule type" value="protein"/>
</dbReference>
<dbReference type="Bgee" id="ENSG00000182134">
    <property type="expression patterns" value="Expressed in primordial germ cell in gonad and 122 other cell types or tissues"/>
</dbReference>
<dbReference type="ExpressionAtlas" id="Q9Y2W6">
    <property type="expression patterns" value="baseline and differential"/>
</dbReference>
<dbReference type="GO" id="GO:0005739">
    <property type="term" value="C:mitochondrion"/>
    <property type="evidence" value="ECO:0006056"/>
    <property type="project" value="FlyBase"/>
</dbReference>
<dbReference type="GO" id="GO:0043186">
    <property type="term" value="C:P granule"/>
    <property type="evidence" value="ECO:0000318"/>
    <property type="project" value="GO_Central"/>
</dbReference>
<dbReference type="GO" id="GO:0071546">
    <property type="term" value="C:pi-body"/>
    <property type="evidence" value="ECO:0000250"/>
    <property type="project" value="UniProtKB"/>
</dbReference>
<dbReference type="GO" id="GO:0071547">
    <property type="term" value="C:piP-body"/>
    <property type="evidence" value="ECO:0000250"/>
    <property type="project" value="UniProtKB"/>
</dbReference>
<dbReference type="GO" id="GO:0003723">
    <property type="term" value="F:RNA binding"/>
    <property type="evidence" value="ECO:0007669"/>
    <property type="project" value="UniProtKB-KW"/>
</dbReference>
<dbReference type="GO" id="GO:0009566">
    <property type="term" value="P:fertilization"/>
    <property type="evidence" value="ECO:0000250"/>
    <property type="project" value="UniProtKB"/>
</dbReference>
<dbReference type="GO" id="GO:0007140">
    <property type="term" value="P:male meiotic nuclear division"/>
    <property type="evidence" value="ECO:0000250"/>
    <property type="project" value="UniProtKB"/>
</dbReference>
<dbReference type="GO" id="GO:0030719">
    <property type="term" value="P:P granule organization"/>
    <property type="evidence" value="ECO:0000318"/>
    <property type="project" value="GO_Central"/>
</dbReference>
<dbReference type="GO" id="GO:0034587">
    <property type="term" value="P:piRNA processing"/>
    <property type="evidence" value="ECO:0000250"/>
    <property type="project" value="UniProtKB"/>
</dbReference>
<dbReference type="GO" id="GO:0007283">
    <property type="term" value="P:spermatogenesis"/>
    <property type="evidence" value="ECO:0000250"/>
    <property type="project" value="UniProtKB"/>
</dbReference>
<dbReference type="CDD" id="cd22428">
    <property type="entry name" value="KH-I_TDRKH_rpt1"/>
    <property type="match status" value="1"/>
</dbReference>
<dbReference type="CDD" id="cd22429">
    <property type="entry name" value="KH-I_TDRKH_rpt2"/>
    <property type="match status" value="1"/>
</dbReference>
<dbReference type="CDD" id="cd20412">
    <property type="entry name" value="Tudor_TDRD2"/>
    <property type="match status" value="1"/>
</dbReference>
<dbReference type="FunFam" id="3.30.1370.10:FF:000056">
    <property type="entry name" value="Tudor and KH domain containing"/>
    <property type="match status" value="1"/>
</dbReference>
<dbReference type="FunFam" id="3.30.1370.10:FF:000059">
    <property type="entry name" value="Tudor and KH domain containing, isoform CRA_a"/>
    <property type="match status" value="1"/>
</dbReference>
<dbReference type="FunFam" id="2.30.30.140:FF:000084">
    <property type="entry name" value="Tudor and KH domain-containing protein"/>
    <property type="match status" value="1"/>
</dbReference>
<dbReference type="Gene3D" id="2.30.30.140">
    <property type="match status" value="1"/>
</dbReference>
<dbReference type="Gene3D" id="2.40.50.90">
    <property type="match status" value="1"/>
</dbReference>
<dbReference type="Gene3D" id="3.30.1370.10">
    <property type="entry name" value="K Homology domain, type 1"/>
    <property type="match status" value="2"/>
</dbReference>
<dbReference type="InterPro" id="IPR047382">
    <property type="entry name" value="KH-I_TDRKH_rpt1"/>
</dbReference>
<dbReference type="InterPro" id="IPR047381">
    <property type="entry name" value="KH-I_TDRKH_rpt2"/>
</dbReference>
<dbReference type="InterPro" id="IPR004087">
    <property type="entry name" value="KH_dom"/>
</dbReference>
<dbReference type="InterPro" id="IPR004088">
    <property type="entry name" value="KH_dom_type_1"/>
</dbReference>
<dbReference type="InterPro" id="IPR036612">
    <property type="entry name" value="KH_dom_type_1_sf"/>
</dbReference>
<dbReference type="InterPro" id="IPR035437">
    <property type="entry name" value="SNase_OB-fold_sf"/>
</dbReference>
<dbReference type="InterPro" id="IPR047380">
    <property type="entry name" value="TDRD2-like_tudor"/>
</dbReference>
<dbReference type="InterPro" id="IPR002999">
    <property type="entry name" value="Tudor"/>
</dbReference>
<dbReference type="InterPro" id="IPR050621">
    <property type="entry name" value="Tudor_domain_containing"/>
</dbReference>
<dbReference type="PANTHER" id="PTHR22948:SF18">
    <property type="entry name" value="TUDOR AND KH DOMAIN-CONTAINING PROTEIN"/>
    <property type="match status" value="1"/>
</dbReference>
<dbReference type="PANTHER" id="PTHR22948">
    <property type="entry name" value="TUDOR DOMAIN CONTAINING PROTEIN"/>
    <property type="match status" value="1"/>
</dbReference>
<dbReference type="Pfam" id="PF00013">
    <property type="entry name" value="KH_1"/>
    <property type="match status" value="2"/>
</dbReference>
<dbReference type="Pfam" id="PF00567">
    <property type="entry name" value="TUDOR"/>
    <property type="match status" value="1"/>
</dbReference>
<dbReference type="SMART" id="SM00322">
    <property type="entry name" value="KH"/>
    <property type="match status" value="2"/>
</dbReference>
<dbReference type="SMART" id="SM00333">
    <property type="entry name" value="TUDOR"/>
    <property type="match status" value="1"/>
</dbReference>
<dbReference type="SUPFAM" id="SSF54791">
    <property type="entry name" value="Eukaryotic type KH-domain (KH-domain type I)"/>
    <property type="match status" value="2"/>
</dbReference>
<dbReference type="SUPFAM" id="SSF63748">
    <property type="entry name" value="Tudor/PWWP/MBT"/>
    <property type="match status" value="1"/>
</dbReference>
<dbReference type="PROSITE" id="PS50084">
    <property type="entry name" value="KH_TYPE_1"/>
    <property type="match status" value="2"/>
</dbReference>
<dbReference type="PROSITE" id="PS50304">
    <property type="entry name" value="TUDOR"/>
    <property type="match status" value="1"/>
</dbReference>
<sequence length="561" mass="62046">MSTERTSWTSLSTIQKIALGLGIPASATVAYILYRRYRESREERLTFVGEDDIEIEMRVPQEAVKLIIGRQGANIKQLRKQTGARIDVDTEDVGDERVLLISGFPVQVCKAKAAIHQILTENTPVSEQLSVPQRSVGRIIGRGGETIRSICKASGAKITCDKESEGTLLLSRLIKISGTQKEVAAAKHLILEKVSEDEELRKRIAHSAETRVPRKQPISVRREDMTEPGGAGEPALWKNTSSSMEPTAPLVTPPPKGGGDMAVVVSKEGSWEKPSDDSFQKSEAQAIPEMPMFEIPSPDFSFHADEYLEVYVSASEHPNHFWIQIVGSRSLQLDKLVNEMTQHYENSVPEDLTVHVGDIVAAPLPTNGSWYRARVLGTLENGNLDLYFVDFGDNGDCPLKDLRALRSDFLSLPFQAIECSLARIAPSGDQWEEEALDEFDRLTHCADWKPLVAKISSYVQTGISTWPKIYLYDTSNGKKLDIGLELVHKGYAIELPEDIEENRAVPDMLKDMATETDASLSTLLTETKKSSGEITHTLSCLSLSEAASMSGDDNLEDDYLL</sequence>
<reference key="1">
    <citation type="journal article" date="2000" name="Gene">
        <title>Complex RNA processing of TDRKH, a novel gene encoding the putative RNA-binding tudor and KH domains.</title>
        <authorList>
            <person name="Lamb F.S."/>
            <person name="Barna T.J."/>
            <person name="Goud C."/>
            <person name="Marenholz I."/>
            <person name="Mischke D."/>
            <person name="Schutte B.C."/>
        </authorList>
    </citation>
    <scope>NUCLEOTIDE SEQUENCE [MRNA] (ISOFORM 1)</scope>
    <source>
        <tissue>Aorta</tissue>
    </source>
</reference>
<reference key="2">
    <citation type="journal article" date="2006" name="Nature">
        <title>The DNA sequence and biological annotation of human chromosome 1.</title>
        <authorList>
            <person name="Gregory S.G."/>
            <person name="Barlow K.F."/>
            <person name="McLay K.E."/>
            <person name="Kaul R."/>
            <person name="Swarbreck D."/>
            <person name="Dunham A."/>
            <person name="Scott C.E."/>
            <person name="Howe K.L."/>
            <person name="Woodfine K."/>
            <person name="Spencer C.C.A."/>
            <person name="Jones M.C."/>
            <person name="Gillson C."/>
            <person name="Searle S."/>
            <person name="Zhou Y."/>
            <person name="Kokocinski F."/>
            <person name="McDonald L."/>
            <person name="Evans R."/>
            <person name="Phillips K."/>
            <person name="Atkinson A."/>
            <person name="Cooper R."/>
            <person name="Jones C."/>
            <person name="Hall R.E."/>
            <person name="Andrews T.D."/>
            <person name="Lloyd C."/>
            <person name="Ainscough R."/>
            <person name="Almeida J.P."/>
            <person name="Ambrose K.D."/>
            <person name="Anderson F."/>
            <person name="Andrew R.W."/>
            <person name="Ashwell R.I.S."/>
            <person name="Aubin K."/>
            <person name="Babbage A.K."/>
            <person name="Bagguley C.L."/>
            <person name="Bailey J."/>
            <person name="Beasley H."/>
            <person name="Bethel G."/>
            <person name="Bird C.P."/>
            <person name="Bray-Allen S."/>
            <person name="Brown J.Y."/>
            <person name="Brown A.J."/>
            <person name="Buckley D."/>
            <person name="Burton J."/>
            <person name="Bye J."/>
            <person name="Carder C."/>
            <person name="Chapman J.C."/>
            <person name="Clark S.Y."/>
            <person name="Clarke G."/>
            <person name="Clee C."/>
            <person name="Cobley V."/>
            <person name="Collier R.E."/>
            <person name="Corby N."/>
            <person name="Coville G.J."/>
            <person name="Davies J."/>
            <person name="Deadman R."/>
            <person name="Dunn M."/>
            <person name="Earthrowl M."/>
            <person name="Ellington A.G."/>
            <person name="Errington H."/>
            <person name="Frankish A."/>
            <person name="Frankland J."/>
            <person name="French L."/>
            <person name="Garner P."/>
            <person name="Garnett J."/>
            <person name="Gay L."/>
            <person name="Ghori M.R.J."/>
            <person name="Gibson R."/>
            <person name="Gilby L.M."/>
            <person name="Gillett W."/>
            <person name="Glithero R.J."/>
            <person name="Grafham D.V."/>
            <person name="Griffiths C."/>
            <person name="Griffiths-Jones S."/>
            <person name="Grocock R."/>
            <person name="Hammond S."/>
            <person name="Harrison E.S.I."/>
            <person name="Hart E."/>
            <person name="Haugen E."/>
            <person name="Heath P.D."/>
            <person name="Holmes S."/>
            <person name="Holt K."/>
            <person name="Howden P.J."/>
            <person name="Hunt A.R."/>
            <person name="Hunt S.E."/>
            <person name="Hunter G."/>
            <person name="Isherwood J."/>
            <person name="James R."/>
            <person name="Johnson C."/>
            <person name="Johnson D."/>
            <person name="Joy A."/>
            <person name="Kay M."/>
            <person name="Kershaw J.K."/>
            <person name="Kibukawa M."/>
            <person name="Kimberley A.M."/>
            <person name="King A."/>
            <person name="Knights A.J."/>
            <person name="Lad H."/>
            <person name="Laird G."/>
            <person name="Lawlor S."/>
            <person name="Leongamornlert D.A."/>
            <person name="Lloyd D.M."/>
            <person name="Loveland J."/>
            <person name="Lovell J."/>
            <person name="Lush M.J."/>
            <person name="Lyne R."/>
            <person name="Martin S."/>
            <person name="Mashreghi-Mohammadi M."/>
            <person name="Matthews L."/>
            <person name="Matthews N.S.W."/>
            <person name="McLaren S."/>
            <person name="Milne S."/>
            <person name="Mistry S."/>
            <person name="Moore M.J.F."/>
            <person name="Nickerson T."/>
            <person name="O'Dell C.N."/>
            <person name="Oliver K."/>
            <person name="Palmeiri A."/>
            <person name="Palmer S.A."/>
            <person name="Parker A."/>
            <person name="Patel D."/>
            <person name="Pearce A.V."/>
            <person name="Peck A.I."/>
            <person name="Pelan S."/>
            <person name="Phelps K."/>
            <person name="Phillimore B.J."/>
            <person name="Plumb R."/>
            <person name="Rajan J."/>
            <person name="Raymond C."/>
            <person name="Rouse G."/>
            <person name="Saenphimmachak C."/>
            <person name="Sehra H.K."/>
            <person name="Sheridan E."/>
            <person name="Shownkeen R."/>
            <person name="Sims S."/>
            <person name="Skuce C.D."/>
            <person name="Smith M."/>
            <person name="Steward C."/>
            <person name="Subramanian S."/>
            <person name="Sycamore N."/>
            <person name="Tracey A."/>
            <person name="Tromans A."/>
            <person name="Van Helmond Z."/>
            <person name="Wall M."/>
            <person name="Wallis J.M."/>
            <person name="White S."/>
            <person name="Whitehead S.L."/>
            <person name="Wilkinson J.E."/>
            <person name="Willey D.L."/>
            <person name="Williams H."/>
            <person name="Wilming L."/>
            <person name="Wray P.W."/>
            <person name="Wu Z."/>
            <person name="Coulson A."/>
            <person name="Vaudin M."/>
            <person name="Sulston J.E."/>
            <person name="Durbin R.M."/>
            <person name="Hubbard T."/>
            <person name="Wooster R."/>
            <person name="Dunham I."/>
            <person name="Carter N.P."/>
            <person name="McVean G."/>
            <person name="Ross M.T."/>
            <person name="Harrow J."/>
            <person name="Olson M.V."/>
            <person name="Beck S."/>
            <person name="Rogers J."/>
            <person name="Bentley D.R."/>
        </authorList>
    </citation>
    <scope>NUCLEOTIDE SEQUENCE [LARGE SCALE GENOMIC DNA]</scope>
</reference>
<reference key="3">
    <citation type="submission" date="2005-09" db="EMBL/GenBank/DDBJ databases">
        <authorList>
            <person name="Mural R.J."/>
            <person name="Istrail S."/>
            <person name="Sutton G.G."/>
            <person name="Florea L."/>
            <person name="Halpern A.L."/>
            <person name="Mobarry C.M."/>
            <person name="Lippert R."/>
            <person name="Walenz B."/>
            <person name="Shatkay H."/>
            <person name="Dew I."/>
            <person name="Miller J.R."/>
            <person name="Flanigan M.J."/>
            <person name="Edwards N.J."/>
            <person name="Bolanos R."/>
            <person name="Fasulo D."/>
            <person name="Halldorsson B.V."/>
            <person name="Hannenhalli S."/>
            <person name="Turner R."/>
            <person name="Yooseph S."/>
            <person name="Lu F."/>
            <person name="Nusskern D.R."/>
            <person name="Shue B.C."/>
            <person name="Zheng X.H."/>
            <person name="Zhong F."/>
            <person name="Delcher A.L."/>
            <person name="Huson D.H."/>
            <person name="Kravitz S.A."/>
            <person name="Mouchard L."/>
            <person name="Reinert K."/>
            <person name="Remington K.A."/>
            <person name="Clark A.G."/>
            <person name="Waterman M.S."/>
            <person name="Eichler E.E."/>
            <person name="Adams M.D."/>
            <person name="Hunkapiller M.W."/>
            <person name="Myers E.W."/>
            <person name="Venter J.C."/>
        </authorList>
    </citation>
    <scope>NUCLEOTIDE SEQUENCE [LARGE SCALE GENOMIC DNA]</scope>
</reference>
<reference key="4">
    <citation type="journal article" date="2004" name="Genome Res.">
        <title>The status, quality, and expansion of the NIH full-length cDNA project: the Mammalian Gene Collection (MGC).</title>
        <authorList>
            <consortium name="The MGC Project Team"/>
        </authorList>
    </citation>
    <scope>NUCLEOTIDE SEQUENCE [LARGE SCALE MRNA] (ISOFORM 1)</scope>
    <source>
        <tissue>Hypothalamus</tissue>
    </source>
</reference>
<reference key="5">
    <citation type="journal article" date="2013" name="J. Proteome Res.">
        <title>Toward a comprehensive characterization of a human cancer cell phosphoproteome.</title>
        <authorList>
            <person name="Zhou H."/>
            <person name="Di Palma S."/>
            <person name="Preisinger C."/>
            <person name="Peng M."/>
            <person name="Polat A.N."/>
            <person name="Heck A.J."/>
            <person name="Mohammed S."/>
        </authorList>
    </citation>
    <scope>PHOSPHORYLATION [LARGE SCALE ANALYSIS] AT SER-278</scope>
    <scope>IDENTIFICATION BY MASS SPECTROMETRY [LARGE SCALE ANALYSIS]</scope>
    <source>
        <tissue>Erythroleukemia</tissue>
    </source>
</reference>
<reference key="6">
    <citation type="journal article" date="2014" name="J. Proteomics">
        <title>An enzyme assisted RP-RPLC approach for in-depth analysis of human liver phosphoproteome.</title>
        <authorList>
            <person name="Bian Y."/>
            <person name="Song C."/>
            <person name="Cheng K."/>
            <person name="Dong M."/>
            <person name="Wang F."/>
            <person name="Huang J."/>
            <person name="Sun D."/>
            <person name="Wang L."/>
            <person name="Ye M."/>
            <person name="Zou H."/>
        </authorList>
    </citation>
    <scope>IDENTIFICATION BY MASS SPECTROMETRY [LARGE SCALE ANALYSIS]</scope>
    <source>
        <tissue>Liver</tissue>
    </source>
</reference>
<reference key="7">
    <citation type="journal article" date="2015" name="Nat. Cell Biol.">
        <title>USP30 and parkin homeostatically regulate atypical ubiquitin chains on mitochondria.</title>
        <authorList>
            <person name="Cunningham C.N."/>
            <person name="Baughman J.M."/>
            <person name="Phu L."/>
            <person name="Tea J.S."/>
            <person name="Yu C."/>
            <person name="Coons M."/>
            <person name="Kirkpatrick D.S."/>
            <person name="Bingol B."/>
            <person name="Corn J.E."/>
        </authorList>
    </citation>
    <scope>UBIQUITINATION AT LYS-65; LYS-76; LYS-110; LYS-112; LYS-152; LYS-175; LYS-181; LYS-187; LYS-193; LYS-256; LYS-267; LYS-479; LYS-510 AND LYS-529</scope>
</reference>
<reference key="8">
    <citation type="journal article" date="2015" name="Proteomics">
        <title>N-terminome analysis of the human mitochondrial proteome.</title>
        <authorList>
            <person name="Vaca Jacome A.S."/>
            <person name="Rabilloud T."/>
            <person name="Schaeffer-Reiss C."/>
            <person name="Rompais M."/>
            <person name="Ayoub D."/>
            <person name="Lane L."/>
            <person name="Bairoch A."/>
            <person name="Van Dorsselaer A."/>
            <person name="Carapito C."/>
        </authorList>
    </citation>
    <scope>IDENTIFICATION BY MASS SPECTROMETRY [LARGE SCALE ANALYSIS]</scope>
</reference>
<reference key="9">
    <citation type="submission" date="2006-09" db="PDB data bank">
        <title>Solution structure of the Tudor domain of Tudor and KH domain-containing protein.</title>
        <authorList>
            <consortium name="RIKEN structural genomics initiative (RSGI)"/>
        </authorList>
    </citation>
    <scope>STRUCTURE BY NMR OF 329-425</scope>
</reference>
<keyword id="KW-0002">3D-structure</keyword>
<keyword id="KW-0025">Alternative splicing</keyword>
<keyword id="KW-0963">Cytoplasm</keyword>
<keyword id="KW-0221">Differentiation</keyword>
<keyword id="KW-1017">Isopeptide bond</keyword>
<keyword id="KW-0496">Mitochondrion</keyword>
<keyword id="KW-0597">Phosphoprotein</keyword>
<keyword id="KW-1267">Proteomics identification</keyword>
<keyword id="KW-1185">Reference proteome</keyword>
<keyword id="KW-0677">Repeat</keyword>
<keyword id="KW-0694">RNA-binding</keyword>
<keyword id="KW-0943">RNA-mediated gene silencing</keyword>
<keyword id="KW-0744">Spermatogenesis</keyword>
<keyword id="KW-0832">Ubl conjugation</keyword>
<evidence type="ECO:0000250" key="1">
    <source>
        <dbReference type="UniProtKB" id="Q80VL1"/>
    </source>
</evidence>
<evidence type="ECO:0000255" key="2">
    <source>
        <dbReference type="PROSITE-ProRule" id="PRU00117"/>
    </source>
</evidence>
<evidence type="ECO:0000255" key="3">
    <source>
        <dbReference type="PROSITE-ProRule" id="PRU00211"/>
    </source>
</evidence>
<evidence type="ECO:0000256" key="4">
    <source>
        <dbReference type="SAM" id="MobiDB-lite"/>
    </source>
</evidence>
<evidence type="ECO:0000269" key="5">
    <source>
    </source>
</evidence>
<evidence type="ECO:0000305" key="6"/>
<evidence type="ECO:0007744" key="7">
    <source>
    </source>
</evidence>
<evidence type="ECO:0007829" key="8">
    <source>
        <dbReference type="PDB" id="2DIQ"/>
    </source>
</evidence>
<evidence type="ECO:0007829" key="9">
    <source>
        <dbReference type="PDB" id="3FDR"/>
    </source>
</evidence>
<evidence type="ECO:0007829" key="10">
    <source>
        <dbReference type="PDB" id="5J39"/>
    </source>
</evidence>
<evidence type="ECO:0007829" key="11">
    <source>
        <dbReference type="PDB" id="6B57"/>
    </source>
</evidence>
<accession>Q9Y2W6</accession>
<accession>D3DV24</accession>
<accession>Q5SZR3</accession>
<accession>Q5SZR5</accession>
<accession>Q8N582</accession>
<accession>Q9NYV5</accession>